<reference key="1">
    <citation type="journal article" date="2008" name="J. Bacteriol.">
        <title>Genome sequence of Staphylococcus aureus strain Newman and comparative analysis of staphylococcal genomes: polymorphism and evolution of two major pathogenicity islands.</title>
        <authorList>
            <person name="Baba T."/>
            <person name="Bae T."/>
            <person name="Schneewind O."/>
            <person name="Takeuchi F."/>
            <person name="Hiramatsu K."/>
        </authorList>
    </citation>
    <scope>NUCLEOTIDE SEQUENCE [LARGE SCALE GENOMIC DNA]</scope>
    <source>
        <strain>Newman</strain>
    </source>
</reference>
<protein>
    <recommendedName>
        <fullName>Acylphosphatase</fullName>
        <ecNumber>3.6.1.7</ecNumber>
    </recommendedName>
    <alternativeName>
        <fullName>Acylphosphate phosphohydrolase</fullName>
    </alternativeName>
</protein>
<name>ACYP_STAAE</name>
<accession>A6QGV5</accession>
<keyword id="KW-0378">Hydrolase</keyword>
<dbReference type="EC" id="3.6.1.7"/>
<dbReference type="EMBL" id="AP009351">
    <property type="protein sequence ID" value="BAF67587.1"/>
    <property type="status" value="ALT_INIT"/>
    <property type="molecule type" value="Genomic_DNA"/>
</dbReference>
<dbReference type="RefSeq" id="WP_001215907.1">
    <property type="nucleotide sequence ID" value="NZ_JBBIAE010000001.1"/>
</dbReference>
<dbReference type="SMR" id="A6QGV5"/>
<dbReference type="KEGG" id="sae:NWMN_1315"/>
<dbReference type="HOGENOM" id="CLU_141932_2_1_9"/>
<dbReference type="Proteomes" id="UP000006386">
    <property type="component" value="Chromosome"/>
</dbReference>
<dbReference type="GO" id="GO:0003998">
    <property type="term" value="F:acylphosphatase activity"/>
    <property type="evidence" value="ECO:0007669"/>
    <property type="project" value="UniProtKB-EC"/>
</dbReference>
<dbReference type="GO" id="GO:0016743">
    <property type="term" value="F:carboxyl- or carbamoyltransferase activity"/>
    <property type="evidence" value="ECO:0007669"/>
    <property type="project" value="TreeGrafter"/>
</dbReference>
<dbReference type="GO" id="GO:0008270">
    <property type="term" value="F:zinc ion binding"/>
    <property type="evidence" value="ECO:0007669"/>
    <property type="project" value="TreeGrafter"/>
</dbReference>
<dbReference type="GO" id="GO:0051604">
    <property type="term" value="P:protein maturation"/>
    <property type="evidence" value="ECO:0007669"/>
    <property type="project" value="TreeGrafter"/>
</dbReference>
<dbReference type="Gene3D" id="3.30.70.100">
    <property type="match status" value="1"/>
</dbReference>
<dbReference type="InterPro" id="IPR001792">
    <property type="entry name" value="Acylphosphatase-like_dom"/>
</dbReference>
<dbReference type="InterPro" id="IPR036046">
    <property type="entry name" value="Acylphosphatase-like_dom_sf"/>
</dbReference>
<dbReference type="InterPro" id="IPR017968">
    <property type="entry name" value="Acylphosphatase_CS"/>
</dbReference>
<dbReference type="InterPro" id="IPR051060">
    <property type="entry name" value="Carbamoyltrans_HypF-like"/>
</dbReference>
<dbReference type="NCBIfam" id="NF011005">
    <property type="entry name" value="PRK14431.1"/>
    <property type="match status" value="1"/>
</dbReference>
<dbReference type="PANTHER" id="PTHR42959">
    <property type="entry name" value="CARBAMOYLTRANSFERASE"/>
    <property type="match status" value="1"/>
</dbReference>
<dbReference type="PANTHER" id="PTHR42959:SF1">
    <property type="entry name" value="CARBAMOYLTRANSFERASE HYPF"/>
    <property type="match status" value="1"/>
</dbReference>
<dbReference type="Pfam" id="PF00708">
    <property type="entry name" value="Acylphosphatase"/>
    <property type="match status" value="1"/>
</dbReference>
<dbReference type="SUPFAM" id="SSF54975">
    <property type="entry name" value="Acylphosphatase/BLUF domain-like"/>
    <property type="match status" value="1"/>
</dbReference>
<dbReference type="PROSITE" id="PS00150">
    <property type="entry name" value="ACYLPHOSPHATASE_1"/>
    <property type="match status" value="1"/>
</dbReference>
<dbReference type="PROSITE" id="PS51160">
    <property type="entry name" value="ACYLPHOSPHATASE_3"/>
    <property type="match status" value="1"/>
</dbReference>
<sequence length="89" mass="10160">MRHIHLQVFGRVQGVGFRYFTQRIAMNYNIVGTVQNVDDYVEIYAQGDDADIERFIQGVIEGASPASNVTSHQLEELELNQKLSDFRSI</sequence>
<organism>
    <name type="scientific">Staphylococcus aureus (strain Newman)</name>
    <dbReference type="NCBI Taxonomy" id="426430"/>
    <lineage>
        <taxon>Bacteria</taxon>
        <taxon>Bacillati</taxon>
        <taxon>Bacillota</taxon>
        <taxon>Bacilli</taxon>
        <taxon>Bacillales</taxon>
        <taxon>Staphylococcaceae</taxon>
        <taxon>Staphylococcus</taxon>
    </lineage>
</organism>
<feature type="chain" id="PRO_0000326817" description="Acylphosphatase">
    <location>
        <begin position="1"/>
        <end position="89"/>
    </location>
</feature>
<feature type="domain" description="Acylphosphatase-like" evidence="1">
    <location>
        <begin position="3"/>
        <end position="89"/>
    </location>
</feature>
<feature type="active site" evidence="1">
    <location>
        <position position="18"/>
    </location>
</feature>
<feature type="active site" evidence="1">
    <location>
        <position position="36"/>
    </location>
</feature>
<evidence type="ECO:0000255" key="1">
    <source>
        <dbReference type="PROSITE-ProRule" id="PRU00520"/>
    </source>
</evidence>
<evidence type="ECO:0000305" key="2"/>
<proteinExistence type="inferred from homology"/>
<comment type="catalytic activity">
    <reaction>
        <text>an acyl phosphate + H2O = a carboxylate + phosphate + H(+)</text>
        <dbReference type="Rhea" id="RHEA:14965"/>
        <dbReference type="ChEBI" id="CHEBI:15377"/>
        <dbReference type="ChEBI" id="CHEBI:15378"/>
        <dbReference type="ChEBI" id="CHEBI:29067"/>
        <dbReference type="ChEBI" id="CHEBI:43474"/>
        <dbReference type="ChEBI" id="CHEBI:59918"/>
        <dbReference type="EC" id="3.6.1.7"/>
    </reaction>
</comment>
<comment type="similarity">
    <text evidence="2">Belongs to the acylphosphatase family.</text>
</comment>
<comment type="sequence caution" evidence="2">
    <conflict type="erroneous initiation">
        <sequence resource="EMBL-CDS" id="BAF67587"/>
    </conflict>
</comment>
<gene>
    <name type="primary">acyP</name>
    <name type="ordered locus">NWMN_1315</name>
</gene>